<organism>
    <name type="scientific">Bacillus cereus (strain AH187)</name>
    <dbReference type="NCBI Taxonomy" id="405534"/>
    <lineage>
        <taxon>Bacteria</taxon>
        <taxon>Bacillati</taxon>
        <taxon>Bacillota</taxon>
        <taxon>Bacilli</taxon>
        <taxon>Bacillales</taxon>
        <taxon>Bacillaceae</taxon>
        <taxon>Bacillus</taxon>
        <taxon>Bacillus cereus group</taxon>
    </lineage>
</organism>
<accession>B7I0F0</accession>
<sequence>MGTILDKIVDQKKKEVAALYETYTPVKEKRKTRSLVKALEQFTVIAEVKRASPSKGDINLHVDVRKQVKAYEECGAGAVSVLTDGQFFKGSFYDLQTAREESSIPLLCKDFIIDKIQIDRAYEAGADIILLIVAALTKEKLKELYSYVLEKGLEAIVEVHDEQELEIAIQFNPHVIGINNRNLKTFEVDLSQTEKLGKRLNEEKLLWISESGVHSKEDMIRVKRAGAKGVLVGEALMTSSSIHTFFEDCKVNI</sequence>
<name>TRPC_BACC7</name>
<feature type="chain" id="PRO_1000198767" description="Indole-3-glycerol phosphate synthase">
    <location>
        <begin position="1"/>
        <end position="253"/>
    </location>
</feature>
<gene>
    <name evidence="1" type="primary">trpC</name>
    <name type="ordered locus">BCAH187_A1396</name>
</gene>
<proteinExistence type="inferred from homology"/>
<protein>
    <recommendedName>
        <fullName evidence="1">Indole-3-glycerol phosphate synthase</fullName>
        <shortName evidence="1">IGPS</shortName>
        <ecNumber evidence="1">4.1.1.48</ecNumber>
    </recommendedName>
</protein>
<comment type="catalytic activity">
    <reaction evidence="1">
        <text>1-(2-carboxyphenylamino)-1-deoxy-D-ribulose 5-phosphate + H(+) = (1S,2R)-1-C-(indol-3-yl)glycerol 3-phosphate + CO2 + H2O</text>
        <dbReference type="Rhea" id="RHEA:23476"/>
        <dbReference type="ChEBI" id="CHEBI:15377"/>
        <dbReference type="ChEBI" id="CHEBI:15378"/>
        <dbReference type="ChEBI" id="CHEBI:16526"/>
        <dbReference type="ChEBI" id="CHEBI:58613"/>
        <dbReference type="ChEBI" id="CHEBI:58866"/>
        <dbReference type="EC" id="4.1.1.48"/>
    </reaction>
</comment>
<comment type="pathway">
    <text evidence="1">Amino-acid biosynthesis; L-tryptophan biosynthesis; L-tryptophan from chorismate: step 4/5.</text>
</comment>
<comment type="similarity">
    <text evidence="1">Belongs to the TrpC family.</text>
</comment>
<keyword id="KW-0028">Amino-acid biosynthesis</keyword>
<keyword id="KW-0057">Aromatic amino acid biosynthesis</keyword>
<keyword id="KW-0210">Decarboxylase</keyword>
<keyword id="KW-0456">Lyase</keyword>
<keyword id="KW-0822">Tryptophan biosynthesis</keyword>
<evidence type="ECO:0000255" key="1">
    <source>
        <dbReference type="HAMAP-Rule" id="MF_00134"/>
    </source>
</evidence>
<reference key="1">
    <citation type="submission" date="2008-10" db="EMBL/GenBank/DDBJ databases">
        <title>Genome sequence of Bacillus cereus AH187.</title>
        <authorList>
            <person name="Dodson R.J."/>
            <person name="Durkin A.S."/>
            <person name="Rosovitz M.J."/>
            <person name="Rasko D.A."/>
            <person name="Kolsto A.B."/>
            <person name="Okstad O.A."/>
            <person name="Ravel J."/>
            <person name="Sutton G."/>
        </authorList>
    </citation>
    <scope>NUCLEOTIDE SEQUENCE [LARGE SCALE GENOMIC DNA]</scope>
    <source>
        <strain>AH187</strain>
    </source>
</reference>
<dbReference type="EC" id="4.1.1.48" evidence="1"/>
<dbReference type="EMBL" id="CP001177">
    <property type="protein sequence ID" value="ACJ81549.1"/>
    <property type="molecule type" value="Genomic_DNA"/>
</dbReference>
<dbReference type="SMR" id="B7I0F0"/>
<dbReference type="KEGG" id="bcr:BCAH187_A1396"/>
<dbReference type="HOGENOM" id="CLU_034247_2_0_9"/>
<dbReference type="UniPathway" id="UPA00035">
    <property type="reaction ID" value="UER00043"/>
</dbReference>
<dbReference type="Proteomes" id="UP000002214">
    <property type="component" value="Chromosome"/>
</dbReference>
<dbReference type="GO" id="GO:0004425">
    <property type="term" value="F:indole-3-glycerol-phosphate synthase activity"/>
    <property type="evidence" value="ECO:0007669"/>
    <property type="project" value="UniProtKB-UniRule"/>
</dbReference>
<dbReference type="GO" id="GO:0004640">
    <property type="term" value="F:phosphoribosylanthranilate isomerase activity"/>
    <property type="evidence" value="ECO:0007669"/>
    <property type="project" value="TreeGrafter"/>
</dbReference>
<dbReference type="GO" id="GO:0000162">
    <property type="term" value="P:L-tryptophan biosynthetic process"/>
    <property type="evidence" value="ECO:0007669"/>
    <property type="project" value="UniProtKB-UniRule"/>
</dbReference>
<dbReference type="CDD" id="cd00331">
    <property type="entry name" value="IGPS"/>
    <property type="match status" value="1"/>
</dbReference>
<dbReference type="FunFam" id="3.20.20.70:FF:000024">
    <property type="entry name" value="Indole-3-glycerol phosphate synthase"/>
    <property type="match status" value="1"/>
</dbReference>
<dbReference type="Gene3D" id="3.20.20.70">
    <property type="entry name" value="Aldolase class I"/>
    <property type="match status" value="1"/>
</dbReference>
<dbReference type="HAMAP" id="MF_00134_B">
    <property type="entry name" value="IGPS_B"/>
    <property type="match status" value="1"/>
</dbReference>
<dbReference type="InterPro" id="IPR013785">
    <property type="entry name" value="Aldolase_TIM"/>
</dbReference>
<dbReference type="InterPro" id="IPR045186">
    <property type="entry name" value="Indole-3-glycerol_P_synth"/>
</dbReference>
<dbReference type="InterPro" id="IPR013798">
    <property type="entry name" value="Indole-3-glycerol_P_synth_dom"/>
</dbReference>
<dbReference type="InterPro" id="IPR001468">
    <property type="entry name" value="Indole-3-GlycerolPSynthase_CS"/>
</dbReference>
<dbReference type="InterPro" id="IPR011060">
    <property type="entry name" value="RibuloseP-bd_barrel"/>
</dbReference>
<dbReference type="NCBIfam" id="NF001371">
    <property type="entry name" value="PRK00278.1-3"/>
    <property type="match status" value="1"/>
</dbReference>
<dbReference type="NCBIfam" id="NF001377">
    <property type="entry name" value="PRK00278.2-4"/>
    <property type="match status" value="1"/>
</dbReference>
<dbReference type="PANTHER" id="PTHR22854:SF2">
    <property type="entry name" value="INDOLE-3-GLYCEROL-PHOSPHATE SYNTHASE"/>
    <property type="match status" value="1"/>
</dbReference>
<dbReference type="PANTHER" id="PTHR22854">
    <property type="entry name" value="TRYPTOPHAN BIOSYNTHESIS PROTEIN"/>
    <property type="match status" value="1"/>
</dbReference>
<dbReference type="Pfam" id="PF00218">
    <property type="entry name" value="IGPS"/>
    <property type="match status" value="1"/>
</dbReference>
<dbReference type="SUPFAM" id="SSF51366">
    <property type="entry name" value="Ribulose-phoshate binding barrel"/>
    <property type="match status" value="1"/>
</dbReference>
<dbReference type="PROSITE" id="PS00614">
    <property type="entry name" value="IGPS"/>
    <property type="match status" value="1"/>
</dbReference>